<sequence length="419" mass="44385">MNIASQIEDMGRRARAAGRRLAAASPAAKAGALDHLATLLEQRQDAILAANAADLAAAAEAGMDAPRMDRLRLTPATIAEMAAACRHVAALPDPVGAIETQWQRPNGLLVGKMRIPLGVIAMIYESRPNVTIDSAILCLKAGNAVILRGGSEAIHSNLALAALITEALSSVGLPAEAVQVVSTTDRAVIAELCKLEEHIDVIIPRGGETLIRAVVDMARMPVLKHYKGVCHAYIDRGADLAQAVEIIHNAKVQRPGVCNALEGLLVHRDEAAAFLPAIAERLGNDGVEFRACPASLPLLGDSAIPMKDEDNGQEFHDLILLVRIVDDMDEALAHIAAYGSNHTEIICTRDHGNAMRFLREADASMVAVNASSRFNDGGQLGLGAEIGISTSKLHSYGPMGVQELTTTKFVVFGAGQIRQ</sequence>
<dbReference type="EC" id="1.2.1.41" evidence="1"/>
<dbReference type="EMBL" id="CP000527">
    <property type="protein sequence ID" value="ABM28235.1"/>
    <property type="molecule type" value="Genomic_DNA"/>
</dbReference>
<dbReference type="RefSeq" id="WP_011792140.1">
    <property type="nucleotide sequence ID" value="NC_008751.1"/>
</dbReference>
<dbReference type="SMR" id="A1VCR9"/>
<dbReference type="KEGG" id="dvl:Dvul_1215"/>
<dbReference type="HOGENOM" id="CLU_030231_0_0_7"/>
<dbReference type="UniPathway" id="UPA00098">
    <property type="reaction ID" value="UER00360"/>
</dbReference>
<dbReference type="Proteomes" id="UP000009173">
    <property type="component" value="Chromosome"/>
</dbReference>
<dbReference type="GO" id="GO:0005737">
    <property type="term" value="C:cytoplasm"/>
    <property type="evidence" value="ECO:0007669"/>
    <property type="project" value="UniProtKB-SubCell"/>
</dbReference>
<dbReference type="GO" id="GO:0004350">
    <property type="term" value="F:glutamate-5-semialdehyde dehydrogenase activity"/>
    <property type="evidence" value="ECO:0007669"/>
    <property type="project" value="UniProtKB-UniRule"/>
</dbReference>
<dbReference type="GO" id="GO:0050661">
    <property type="term" value="F:NADP binding"/>
    <property type="evidence" value="ECO:0007669"/>
    <property type="project" value="InterPro"/>
</dbReference>
<dbReference type="GO" id="GO:0055129">
    <property type="term" value="P:L-proline biosynthetic process"/>
    <property type="evidence" value="ECO:0007669"/>
    <property type="project" value="UniProtKB-UniRule"/>
</dbReference>
<dbReference type="CDD" id="cd07079">
    <property type="entry name" value="ALDH_F18-19_ProA-GPR"/>
    <property type="match status" value="1"/>
</dbReference>
<dbReference type="FunFam" id="3.40.309.10:FF:000006">
    <property type="entry name" value="Gamma-glutamyl phosphate reductase"/>
    <property type="match status" value="1"/>
</dbReference>
<dbReference type="Gene3D" id="3.40.605.10">
    <property type="entry name" value="Aldehyde Dehydrogenase, Chain A, domain 1"/>
    <property type="match status" value="1"/>
</dbReference>
<dbReference type="Gene3D" id="3.40.309.10">
    <property type="entry name" value="Aldehyde Dehydrogenase, Chain A, domain 2"/>
    <property type="match status" value="1"/>
</dbReference>
<dbReference type="HAMAP" id="MF_00412">
    <property type="entry name" value="ProA"/>
    <property type="match status" value="1"/>
</dbReference>
<dbReference type="InterPro" id="IPR016161">
    <property type="entry name" value="Ald_DH/histidinol_DH"/>
</dbReference>
<dbReference type="InterPro" id="IPR016163">
    <property type="entry name" value="Ald_DH_C"/>
</dbReference>
<dbReference type="InterPro" id="IPR016162">
    <property type="entry name" value="Ald_DH_N"/>
</dbReference>
<dbReference type="InterPro" id="IPR015590">
    <property type="entry name" value="Aldehyde_DH_dom"/>
</dbReference>
<dbReference type="InterPro" id="IPR020593">
    <property type="entry name" value="G-glutamylP_reductase_CS"/>
</dbReference>
<dbReference type="InterPro" id="IPR012134">
    <property type="entry name" value="Glu-5-SA_DH"/>
</dbReference>
<dbReference type="InterPro" id="IPR000965">
    <property type="entry name" value="GPR_dom"/>
</dbReference>
<dbReference type="NCBIfam" id="NF001221">
    <property type="entry name" value="PRK00197.1"/>
    <property type="match status" value="1"/>
</dbReference>
<dbReference type="NCBIfam" id="TIGR00407">
    <property type="entry name" value="proA"/>
    <property type="match status" value="1"/>
</dbReference>
<dbReference type="PANTHER" id="PTHR11063:SF8">
    <property type="entry name" value="DELTA-1-PYRROLINE-5-CARBOXYLATE SYNTHASE"/>
    <property type="match status" value="1"/>
</dbReference>
<dbReference type="PANTHER" id="PTHR11063">
    <property type="entry name" value="GLUTAMATE SEMIALDEHYDE DEHYDROGENASE"/>
    <property type="match status" value="1"/>
</dbReference>
<dbReference type="Pfam" id="PF00171">
    <property type="entry name" value="Aldedh"/>
    <property type="match status" value="1"/>
</dbReference>
<dbReference type="PIRSF" id="PIRSF000151">
    <property type="entry name" value="GPR"/>
    <property type="match status" value="1"/>
</dbReference>
<dbReference type="SUPFAM" id="SSF53720">
    <property type="entry name" value="ALDH-like"/>
    <property type="match status" value="1"/>
</dbReference>
<dbReference type="PROSITE" id="PS01223">
    <property type="entry name" value="PROA"/>
    <property type="match status" value="1"/>
</dbReference>
<proteinExistence type="inferred from homology"/>
<name>PROA_NITV4</name>
<organism>
    <name type="scientific">Nitratidesulfovibrio vulgaris (strain DP4)</name>
    <name type="common">Desulfovibrio vulgaris</name>
    <dbReference type="NCBI Taxonomy" id="391774"/>
    <lineage>
        <taxon>Bacteria</taxon>
        <taxon>Pseudomonadati</taxon>
        <taxon>Thermodesulfobacteriota</taxon>
        <taxon>Desulfovibrionia</taxon>
        <taxon>Desulfovibrionales</taxon>
        <taxon>Desulfovibrionaceae</taxon>
        <taxon>Nitratidesulfovibrio</taxon>
    </lineage>
</organism>
<comment type="function">
    <text evidence="1">Catalyzes the NADPH-dependent reduction of L-glutamate 5-phosphate into L-glutamate 5-semialdehyde and phosphate. The product spontaneously undergoes cyclization to form 1-pyrroline-5-carboxylate.</text>
</comment>
<comment type="catalytic activity">
    <reaction evidence="1">
        <text>L-glutamate 5-semialdehyde + phosphate + NADP(+) = L-glutamyl 5-phosphate + NADPH + H(+)</text>
        <dbReference type="Rhea" id="RHEA:19541"/>
        <dbReference type="ChEBI" id="CHEBI:15378"/>
        <dbReference type="ChEBI" id="CHEBI:43474"/>
        <dbReference type="ChEBI" id="CHEBI:57783"/>
        <dbReference type="ChEBI" id="CHEBI:58066"/>
        <dbReference type="ChEBI" id="CHEBI:58274"/>
        <dbReference type="ChEBI" id="CHEBI:58349"/>
        <dbReference type="EC" id="1.2.1.41"/>
    </reaction>
</comment>
<comment type="pathway">
    <text evidence="1">Amino-acid biosynthesis; L-proline biosynthesis; L-glutamate 5-semialdehyde from L-glutamate: step 2/2.</text>
</comment>
<comment type="subcellular location">
    <subcellularLocation>
        <location evidence="1">Cytoplasm</location>
    </subcellularLocation>
</comment>
<comment type="similarity">
    <text evidence="1">Belongs to the gamma-glutamyl phosphate reductase family.</text>
</comment>
<reference key="1">
    <citation type="journal article" date="2009" name="Environ. Microbiol.">
        <title>Contribution of mobile genetic elements to Desulfovibrio vulgaris genome plasticity.</title>
        <authorList>
            <person name="Walker C.B."/>
            <person name="Stolyar S."/>
            <person name="Chivian D."/>
            <person name="Pinel N."/>
            <person name="Gabster J.A."/>
            <person name="Dehal P.S."/>
            <person name="He Z."/>
            <person name="Yang Z.K."/>
            <person name="Yen H.C."/>
            <person name="Zhou J."/>
            <person name="Wall J.D."/>
            <person name="Hazen T.C."/>
            <person name="Arkin A.P."/>
            <person name="Stahl D.A."/>
        </authorList>
    </citation>
    <scope>NUCLEOTIDE SEQUENCE [LARGE SCALE GENOMIC DNA]</scope>
    <source>
        <strain>DP4</strain>
    </source>
</reference>
<keyword id="KW-0028">Amino-acid biosynthesis</keyword>
<keyword id="KW-0963">Cytoplasm</keyword>
<keyword id="KW-0521">NADP</keyword>
<keyword id="KW-0560">Oxidoreductase</keyword>
<keyword id="KW-0641">Proline biosynthesis</keyword>
<evidence type="ECO:0000255" key="1">
    <source>
        <dbReference type="HAMAP-Rule" id="MF_00412"/>
    </source>
</evidence>
<protein>
    <recommendedName>
        <fullName evidence="1">Gamma-glutamyl phosphate reductase</fullName>
        <shortName evidence="1">GPR</shortName>
        <ecNumber evidence="1">1.2.1.41</ecNumber>
    </recommendedName>
    <alternativeName>
        <fullName evidence="1">Glutamate-5-semialdehyde dehydrogenase</fullName>
    </alternativeName>
    <alternativeName>
        <fullName evidence="1">Glutamyl-gamma-semialdehyde dehydrogenase</fullName>
        <shortName evidence="1">GSA dehydrogenase</shortName>
    </alternativeName>
</protein>
<accession>A1VCR9</accession>
<gene>
    <name evidence="1" type="primary">proA</name>
    <name type="ordered locus">Dvul_1215</name>
</gene>
<feature type="chain" id="PRO_1000049948" description="Gamma-glutamyl phosphate reductase">
    <location>
        <begin position="1"/>
        <end position="419"/>
    </location>
</feature>